<organism>
    <name type="scientific">Vicia faba</name>
    <name type="common">Broad bean</name>
    <name type="synonym">Faba vulgaris</name>
    <dbReference type="NCBI Taxonomy" id="3906"/>
    <lineage>
        <taxon>Eukaryota</taxon>
        <taxon>Viridiplantae</taxon>
        <taxon>Streptophyta</taxon>
        <taxon>Embryophyta</taxon>
        <taxon>Tracheophyta</taxon>
        <taxon>Spermatophyta</taxon>
        <taxon>Magnoliopsida</taxon>
        <taxon>eudicotyledons</taxon>
        <taxon>Gunneridae</taxon>
        <taxon>Pentapetalae</taxon>
        <taxon>rosids</taxon>
        <taxon>fabids</taxon>
        <taxon>Fabales</taxon>
        <taxon>Fabaceae</taxon>
        <taxon>Papilionoideae</taxon>
        <taxon>50 kb inversion clade</taxon>
        <taxon>NPAAA clade</taxon>
        <taxon>Hologalegina</taxon>
        <taxon>IRL clade</taxon>
        <taxon>Fabeae</taxon>
        <taxon>Vicia</taxon>
    </lineage>
</organism>
<keyword id="KW-0021">Allosteric enzyme</keyword>
<keyword id="KW-0035">Amyloplast</keyword>
<keyword id="KW-0119">Carbohydrate metabolism</keyword>
<keyword id="KW-0150">Chloroplast</keyword>
<keyword id="KW-0328">Glycosyltransferase</keyword>
<keyword id="KW-0934">Plastid</keyword>
<keyword id="KW-0663">Pyridoxal phosphate</keyword>
<keyword id="KW-0808">Transferase</keyword>
<keyword id="KW-0809">Transit peptide</keyword>
<feature type="transit peptide" description="Chloroplast" evidence="2">
    <location>
        <begin position="1"/>
        <end position="64"/>
    </location>
</feature>
<feature type="chain" id="PRO_0000012294" description="Alpha-1,4 glucan phosphorylase L isozyme, chloroplastic/amyloplastic">
    <location>
        <begin position="65"/>
        <end position="1003"/>
    </location>
</feature>
<feature type="region of interest" description="Disordered" evidence="3">
    <location>
        <begin position="71"/>
        <end position="91"/>
    </location>
</feature>
<feature type="region of interest" description="Disordered" evidence="3">
    <location>
        <begin position="526"/>
        <end position="593"/>
    </location>
</feature>
<feature type="compositionally biased region" description="Acidic residues" evidence="3">
    <location>
        <begin position="537"/>
        <end position="553"/>
    </location>
</feature>
<feature type="compositionally biased region" description="Basic and acidic residues" evidence="3">
    <location>
        <begin position="569"/>
        <end position="580"/>
    </location>
</feature>
<feature type="modified residue" description="N6-(pyridoxal phosphate)lysine" evidence="1">
    <location>
        <position position="849"/>
    </location>
</feature>
<reference key="1">
    <citation type="journal article" date="1996" name="Planta">
        <title>Glucan phosphorylases in Vicia faba L.: cloning, structural analysis and expression patterns of cytosolic and plastidic forms in relation to starch.</title>
        <authorList>
            <person name="Buchner P."/>
            <person name="Borisjuk L."/>
            <person name="Wobus U."/>
        </authorList>
    </citation>
    <scope>NUCLEOTIDE SEQUENCE [MRNA]</scope>
    <source>
        <strain>cv. Fribo</strain>
        <tissue>Cotyledon</tissue>
    </source>
</reference>
<evidence type="ECO:0000250" key="1"/>
<evidence type="ECO:0000255" key="2"/>
<evidence type="ECO:0000256" key="3">
    <source>
        <dbReference type="SAM" id="MobiDB-lite"/>
    </source>
</evidence>
<evidence type="ECO:0000305" key="4"/>
<protein>
    <recommendedName>
        <fullName>Alpha-1,4 glucan phosphorylase L isozyme, chloroplastic/amyloplastic</fullName>
        <ecNumber>2.4.1.1</ecNumber>
    </recommendedName>
    <alternativeName>
        <fullName>Starch phosphorylase L</fullName>
    </alternativeName>
</protein>
<name>PHSL_VICFA</name>
<accession>P53536</accession>
<sequence length="1003" mass="113580">MASMTMRFHPNSTAVTESVPRRGSVYGFIGYRSSSLFVRTNVIKYRSVKRNLEFRRRSAFSVKCGSGNEAKQKVKDQEVQQEAKTSPSSFAPDTTSIVSSIKYHAEFTPLFSPEKFELPQAFIATAQSVRDALIINWNATYDYYEKLNVKQAYYLSMEFLQGRALLNAIGNLELTGPYAEALSQLSYKLEDVAHQEPDAALGNGGLGRLASCFLDSLATLNYPAWGYGLRYKYGLFKQRITKDGQEEVAEDWLEMGNPWEIVRNDVSYPVRFYGKVVSGSDGKKHWVGGEDIKAVAHDVPIPGYKTRSTINLRLWSTKAASEEFDLNAFNSGRHTEASEALANAEKICYILYPGDESIEGKTLRLKQQYTLCSASLQDIIARFERRSGASVNWEDFPEKVAVQMNDTHPTLCIPELMRILIDIKGLSWKDAWNITQRTVAYTNHTVLPEALEKWSMDLMEKLLPRHVEIIEMIDEELIRTIIAEYGTADSDLLDKKLKEMRILENVELPAEFADILVKTKEATDISSEEVQISKEGGEEEETSKEGGEEEEEKEVGGGREEGDDGKEDEVEKAIAEKDGTVKSSIGDKKKKLPEPVPVPPKLVRMANLCVVGGHAVNGVAEIHSEIVKDDVFNAFYKLWPEKFQNKTNGVTPRRWIRFCNPDLSKIITQWIGTEDWILNTEKLAELRKFADNEDLQTQWREAKRNNKVKVAAFLRERTGYSVSPDSMFDIQVKRIHEYKRQLLNIFGIVYRYKKMKEMNAAERKENFVPRVCIFGGKAFATYVQAKRIVKFITDVGATVNHDPEIGDLLKVIFVPDYNVSVAEMLIPASELSQHISTAGMEASGTSNMKFAMNGCLQIGTLDGANVEIREEVGADNFFLFGAKAREIVGLRKERARGKFVPDPRFEEVKKFVRSGVFGSYNYDELIGSLEGNEGFGRADYFLVGQDFPSYLECQEEVDKAYRDQKKWTRMSILNTAGSSKFSSDRTIHEYAREIWNIEPVKLE</sequence>
<proteinExistence type="evidence at transcript level"/>
<dbReference type="EC" id="2.4.1.1"/>
<dbReference type="EMBL" id="Z36880">
    <property type="protein sequence ID" value="CAA85354.1"/>
    <property type="molecule type" value="mRNA"/>
</dbReference>
<dbReference type="PIR" id="S47243">
    <property type="entry name" value="S47243"/>
</dbReference>
<dbReference type="SMR" id="P53536"/>
<dbReference type="CAZy" id="GT35">
    <property type="family name" value="Glycosyltransferase Family 35"/>
</dbReference>
<dbReference type="GO" id="GO:0009501">
    <property type="term" value="C:amyloplast"/>
    <property type="evidence" value="ECO:0007669"/>
    <property type="project" value="UniProtKB-SubCell"/>
</dbReference>
<dbReference type="GO" id="GO:0009507">
    <property type="term" value="C:chloroplast"/>
    <property type="evidence" value="ECO:0007669"/>
    <property type="project" value="UniProtKB-SubCell"/>
</dbReference>
<dbReference type="GO" id="GO:0008184">
    <property type="term" value="F:glycogen phosphorylase activity"/>
    <property type="evidence" value="ECO:0007669"/>
    <property type="project" value="InterPro"/>
</dbReference>
<dbReference type="GO" id="GO:0030170">
    <property type="term" value="F:pyridoxal phosphate binding"/>
    <property type="evidence" value="ECO:0007669"/>
    <property type="project" value="InterPro"/>
</dbReference>
<dbReference type="GO" id="GO:0005980">
    <property type="term" value="P:glycogen catabolic process"/>
    <property type="evidence" value="ECO:0007669"/>
    <property type="project" value="TreeGrafter"/>
</dbReference>
<dbReference type="CDD" id="cd04300">
    <property type="entry name" value="GT35_Glycogen_Phosphorylase"/>
    <property type="match status" value="1"/>
</dbReference>
<dbReference type="FunFam" id="3.40.50.2000:FF:000003">
    <property type="entry name" value="Alpha-1,4 glucan phosphorylase"/>
    <property type="match status" value="1"/>
</dbReference>
<dbReference type="FunFam" id="3.40.50.2000:FF:000105">
    <property type="entry name" value="Alpha-1,4 glucan phosphorylase"/>
    <property type="match status" value="1"/>
</dbReference>
<dbReference type="Gene3D" id="3.40.50.2000">
    <property type="entry name" value="Glycogen Phosphorylase B"/>
    <property type="match status" value="3"/>
</dbReference>
<dbReference type="InterPro" id="IPR011833">
    <property type="entry name" value="Glycg_phsphrylas"/>
</dbReference>
<dbReference type="InterPro" id="IPR000811">
    <property type="entry name" value="Glyco_trans_35"/>
</dbReference>
<dbReference type="InterPro" id="IPR035090">
    <property type="entry name" value="Pyridoxal_P_attach_site"/>
</dbReference>
<dbReference type="NCBIfam" id="TIGR02093">
    <property type="entry name" value="P_ylase"/>
    <property type="match status" value="1"/>
</dbReference>
<dbReference type="PANTHER" id="PTHR11468:SF28">
    <property type="entry name" value="ALPHA-GLUCAN PHOSPHORYLASE 1"/>
    <property type="match status" value="1"/>
</dbReference>
<dbReference type="PANTHER" id="PTHR11468">
    <property type="entry name" value="GLYCOGEN PHOSPHORYLASE"/>
    <property type="match status" value="1"/>
</dbReference>
<dbReference type="Pfam" id="PF00343">
    <property type="entry name" value="Phosphorylase"/>
    <property type="match status" value="2"/>
</dbReference>
<dbReference type="PIRSF" id="PIRSF000460">
    <property type="entry name" value="Pprylas_GlgP"/>
    <property type="match status" value="1"/>
</dbReference>
<dbReference type="SUPFAM" id="SSF53756">
    <property type="entry name" value="UDP-Glycosyltransferase/glycogen phosphorylase"/>
    <property type="match status" value="2"/>
</dbReference>
<dbReference type="PROSITE" id="PS00102">
    <property type="entry name" value="PHOSPHORYLASE"/>
    <property type="match status" value="1"/>
</dbReference>
<comment type="function">
    <text>Phosphorylase is an important allosteric enzyme in carbohydrate metabolism. Enzymes from different sources differ in their regulatory mechanisms and in their natural substrates. However, all known phosphorylases share catalytic and structural properties.</text>
</comment>
<comment type="function">
    <text>The L isoform exhibits higher affinity for unbranched substrates such as glucan-like amylose and maltodextrin.</text>
</comment>
<comment type="catalytic activity">
    <reaction>
        <text>[(1-&gt;4)-alpha-D-glucosyl](n) + phosphate = [(1-&gt;4)-alpha-D-glucosyl](n-1) + alpha-D-glucose 1-phosphate</text>
        <dbReference type="Rhea" id="RHEA:41732"/>
        <dbReference type="Rhea" id="RHEA-COMP:9584"/>
        <dbReference type="Rhea" id="RHEA-COMP:9586"/>
        <dbReference type="ChEBI" id="CHEBI:15444"/>
        <dbReference type="ChEBI" id="CHEBI:43474"/>
        <dbReference type="ChEBI" id="CHEBI:58601"/>
        <dbReference type="EC" id="2.4.1.1"/>
    </reaction>
</comment>
<comment type="cofactor">
    <cofactor>
        <name>pyridoxal 5'-phosphate</name>
        <dbReference type="ChEBI" id="CHEBI:597326"/>
    </cofactor>
</comment>
<comment type="subcellular location">
    <subcellularLocation>
        <location>Plastid</location>
        <location>Chloroplast</location>
    </subcellularLocation>
    <subcellularLocation>
        <location>Plastid</location>
        <location>Amyloplast</location>
    </subcellularLocation>
</comment>
<comment type="tissue specificity">
    <text>Found predominantly in cotyledons and early seed coat.</text>
</comment>
<comment type="similarity">
    <text evidence="4">Belongs to the glycogen phosphorylase family.</text>
</comment>
<gene>
    <name type="primary">PHO1</name>
</gene>